<keyword id="KW-0053">Apoptosis</keyword>
<keyword id="KW-1035">Host cytoplasm</keyword>
<keyword id="KW-1043">Host membrane</keyword>
<keyword id="KW-1045">Host mitochondrion</keyword>
<keyword id="KW-1046">Host mitochondrion inner membrane</keyword>
<keyword id="KW-1048">Host nucleus</keyword>
<keyword id="KW-0945">Host-virus interaction</keyword>
<keyword id="KW-1090">Inhibition of host innate immune response by virus</keyword>
<keyword id="KW-1097">Inhibition of host MAVS by virus</keyword>
<keyword id="KW-1113">Inhibition of host RLR pathway by virus</keyword>
<keyword id="KW-0472">Membrane</keyword>
<keyword id="KW-1119">Modulation of host cell apoptosis by virus</keyword>
<keyword id="KW-0899">Viral immunoevasion</keyword>
<reference key="1">
    <citation type="submission" date="2005-10" db="EMBL/GenBank/DDBJ databases">
        <title>The NIAID influenza genome sequencing project.</title>
        <authorList>
            <person name="Ghedin E."/>
            <person name="Spiro D."/>
            <person name="Miller N."/>
            <person name="Zaborsky J."/>
            <person name="Feldblyum T."/>
            <person name="Subbu V."/>
            <person name="Shumway M."/>
            <person name="Sparenborg J."/>
            <person name="Groveman L."/>
            <person name="Halpin R."/>
            <person name="Sitz J."/>
            <person name="Koo H."/>
            <person name="Salzberg S.L."/>
            <person name="Webster R.G."/>
            <person name="Hoffmann E."/>
            <person name="Krauss S."/>
            <person name="Naeve C."/>
            <person name="Bao Y."/>
            <person name="Bolotov P."/>
            <person name="Dernovoy D."/>
            <person name="Kiryutin B."/>
            <person name="Lipman D.J."/>
            <person name="Tatusova T."/>
        </authorList>
    </citation>
    <scope>NUCLEOTIDE SEQUENCE [GENOMIC RNA]</scope>
</reference>
<protein>
    <recommendedName>
        <fullName evidence="1">Protein PB1-F2</fullName>
    </recommendedName>
</protein>
<dbReference type="EMBL" id="CY003742">
    <property type="protein sequence ID" value="ABB04948.1"/>
    <property type="molecule type" value="Genomic_RNA"/>
</dbReference>
<dbReference type="SMR" id="Q38SP9"/>
<dbReference type="Proteomes" id="UP000167548">
    <property type="component" value="Genome"/>
</dbReference>
<dbReference type="GO" id="GO:0044164">
    <property type="term" value="C:host cell cytosol"/>
    <property type="evidence" value="ECO:0007669"/>
    <property type="project" value="UniProtKB-SubCell"/>
</dbReference>
<dbReference type="GO" id="GO:0044192">
    <property type="term" value="C:host cell mitochondrial inner membrane"/>
    <property type="evidence" value="ECO:0007669"/>
    <property type="project" value="UniProtKB-SubCell"/>
</dbReference>
<dbReference type="GO" id="GO:0042025">
    <property type="term" value="C:host cell nucleus"/>
    <property type="evidence" value="ECO:0007669"/>
    <property type="project" value="UniProtKB-SubCell"/>
</dbReference>
<dbReference type="GO" id="GO:0016020">
    <property type="term" value="C:membrane"/>
    <property type="evidence" value="ECO:0007669"/>
    <property type="project" value="UniProtKB-UniRule"/>
</dbReference>
<dbReference type="GO" id="GO:0052150">
    <property type="term" value="P:symbiont-mediated perturbation of host apoptosis"/>
    <property type="evidence" value="ECO:0007669"/>
    <property type="project" value="UniProtKB-KW"/>
</dbReference>
<dbReference type="GO" id="GO:0039545">
    <property type="term" value="P:symbiont-mediated suppression of host cytoplasmic pattern recognition receptor signaling pathway via inhibition of MAVS activity"/>
    <property type="evidence" value="ECO:0007669"/>
    <property type="project" value="UniProtKB-KW"/>
</dbReference>
<dbReference type="HAMAP" id="MF_04064">
    <property type="entry name" value="INFV_PB1F2"/>
    <property type="match status" value="1"/>
</dbReference>
<dbReference type="InterPro" id="IPR021045">
    <property type="entry name" value="Flu_proapoptotic_PB1-F2"/>
</dbReference>
<dbReference type="Pfam" id="PF11986">
    <property type="entry name" value="PB1-F2"/>
    <property type="match status" value="1"/>
</dbReference>
<gene>
    <name evidence="1" type="primary">PB1</name>
</gene>
<organism>
    <name type="scientific">Influenza A virus (strain A/Hong Kong/5/1983 H3N2)</name>
    <dbReference type="NCBI Taxonomy" id="387159"/>
    <lineage>
        <taxon>Viruses</taxon>
        <taxon>Riboviria</taxon>
        <taxon>Orthornavirae</taxon>
        <taxon>Negarnaviricota</taxon>
        <taxon>Polyploviricotina</taxon>
        <taxon>Insthoviricetes</taxon>
        <taxon>Articulavirales</taxon>
        <taxon>Orthomyxoviridae</taxon>
        <taxon>Alphainfluenzavirus</taxon>
        <taxon>Alphainfluenzavirus influenzae</taxon>
        <taxon>Influenza A virus</taxon>
    </lineage>
</organism>
<feature type="chain" id="PRO_0000278713" description="Protein PB1-F2">
    <location>
        <begin position="1"/>
        <end position="90"/>
    </location>
</feature>
<feature type="region of interest" description="Disordered" evidence="2">
    <location>
        <begin position="1"/>
        <end position="34"/>
    </location>
</feature>
<feature type="region of interest" description="Mitochondrial targeting sequence" evidence="1">
    <location>
        <begin position="65"/>
        <end position="87"/>
    </location>
</feature>
<feature type="site" description="Low pathogenicity" evidence="1">
    <location>
        <position position="66"/>
    </location>
</feature>
<evidence type="ECO:0000255" key="1">
    <source>
        <dbReference type="HAMAP-Rule" id="MF_04064"/>
    </source>
</evidence>
<evidence type="ECO:0000256" key="2">
    <source>
        <dbReference type="SAM" id="MobiDB-lite"/>
    </source>
</evidence>
<name>PB1F2_I83A8</name>
<sequence length="90" mass="10724">MEQEQDTPWTQSTEHINIQKKGSGQQTQKLGRPNSTRLMDHYLRIMSQVDMHKQTVSWRLWLSLRNPTQGSLRTRALKQWKSFNKQGWTN</sequence>
<comment type="function">
    <text evidence="1">Plays an important role in promoting lung pathology in both primary viral infection and secondary bacterial infection. Promotes alteration of mitochondrial morphology, dissipation of mitochondrial membrane potential, and cell death. Alternatively, inhibits the production of interferon in the infected cell at the level of host mitochondrial antiviral signaling MAVS. Its level of expression differs greatly depending on which cell type is infected, in a manner that is independent of the levels of expression of other viral proteins. Monocytic cells are more affected than epithelial cells. Seems to disable virus-infected monocytes or other host innate immune cells. During early stage of infection, predisposes the mitochondria to permeability transition through interaction with host SLC25A6/ANT3 and VDAC1. These proteins participate in the formation of the permeability transition pore complex (PTPC) responsible of the release of mitochondrial products that triggers apoptosis.</text>
</comment>
<comment type="subunit">
    <text evidence="1">Oligomer. Interacts with human SLC25A6/ANT3 and VDAC1. Interacts with host MAVS.</text>
</comment>
<comment type="subcellular location">
    <subcellularLocation>
        <location evidence="1">Host mitochondrion inner membrane</location>
    </subcellularLocation>
    <subcellularLocation>
        <location evidence="1">Host nucleus</location>
    </subcellularLocation>
    <subcellularLocation>
        <location evidence="1">Host cytoplasm</location>
        <location evidence="1">Host cytosol</location>
    </subcellularLocation>
    <text evidence="1">Inner mitochondrial membrane in most cells types. Otherwise is detected in the nucleus and cytosol.</text>
</comment>
<comment type="miscellaneous">
    <text>Is not encoded in all strains, and seems to be dispensable for replication.</text>
</comment>
<comment type="similarity">
    <text evidence="1">Belongs to the influenza viruses PB1-F2 family.</text>
</comment>
<proteinExistence type="inferred from homology"/>
<organismHost>
    <name type="scientific">Aves</name>
    <dbReference type="NCBI Taxonomy" id="8782"/>
</organismHost>
<organismHost>
    <name type="scientific">Cetacea</name>
    <name type="common">whales</name>
    <dbReference type="NCBI Taxonomy" id="9721"/>
</organismHost>
<organismHost>
    <name type="scientific">Homo sapiens</name>
    <name type="common">Human</name>
    <dbReference type="NCBI Taxonomy" id="9606"/>
</organismHost>
<organismHost>
    <name type="scientific">Phocidae</name>
    <name type="common">true seals</name>
    <dbReference type="NCBI Taxonomy" id="9709"/>
</organismHost>
<organismHost>
    <name type="scientific">Sus scrofa</name>
    <name type="common">Pig</name>
    <dbReference type="NCBI Taxonomy" id="9823"/>
</organismHost>
<accession>Q38SP9</accession>